<keyword id="KW-0256">Endoplasmic reticulum</keyword>
<keyword id="KW-0408">Iron</keyword>
<keyword id="KW-0444">Lipid biosynthesis</keyword>
<keyword id="KW-0443">Lipid metabolism</keyword>
<keyword id="KW-0472">Membrane</keyword>
<keyword id="KW-0520">NAD</keyword>
<keyword id="KW-0560">Oxidoreductase</keyword>
<keyword id="KW-1185">Reference proteome</keyword>
<keyword id="KW-0752">Steroid biosynthesis</keyword>
<keyword id="KW-0753">Steroid metabolism</keyword>
<keyword id="KW-0756">Sterol biosynthesis</keyword>
<keyword id="KW-1207">Sterol metabolism</keyword>
<keyword id="KW-0812">Transmembrane</keyword>
<keyword id="KW-1133">Transmembrane helix</keyword>
<proteinExistence type="inferred from homology"/>
<feature type="chain" id="PRO_0000380109" description="Putative methylsterol monooxygenase DDB_G0269788">
    <location>
        <begin position="1"/>
        <end position="270"/>
    </location>
</feature>
<feature type="transmembrane region" description="Helical" evidence="2">
    <location>
        <begin position="31"/>
        <end position="51"/>
    </location>
</feature>
<feature type="transmembrane region" description="Helical" evidence="2">
    <location>
        <begin position="82"/>
        <end position="102"/>
    </location>
</feature>
<feature type="transmembrane region" description="Helical" evidence="2">
    <location>
        <begin position="110"/>
        <end position="130"/>
    </location>
</feature>
<feature type="domain" description="Fatty acid hydroxylase" evidence="2">
    <location>
        <begin position="118"/>
        <end position="249"/>
    </location>
</feature>
<feature type="short sequence motif" description="Histidine box-1" evidence="1">
    <location>
        <begin position="132"/>
        <end position="136"/>
    </location>
</feature>
<feature type="short sequence motif" description="Histidine box-2" evidence="1">
    <location>
        <begin position="145"/>
        <end position="149"/>
    </location>
</feature>
<feature type="short sequence motif" description="Histidine box-3" evidence="1">
    <location>
        <begin position="224"/>
        <end position="230"/>
    </location>
</feature>
<name>MSMOB_DICDI</name>
<comment type="catalytic activity">
    <reaction>
        <text>4,4-dimethyl-5alpha-cholest-7-en-3beta-ol + 6 Fe(II)-[cytochrome b5] + 3 O2 + 5 H(+) = 4alpha-carboxy-4beta-methyl-5alpha-cholest-7-ene-3beta-ol + 6 Fe(III)-[cytochrome b5] + 4 H2O</text>
        <dbReference type="Rhea" id="RHEA:55220"/>
        <dbReference type="Rhea" id="RHEA-COMP:10438"/>
        <dbReference type="Rhea" id="RHEA-COMP:10439"/>
        <dbReference type="ChEBI" id="CHEBI:15377"/>
        <dbReference type="ChEBI" id="CHEBI:15378"/>
        <dbReference type="ChEBI" id="CHEBI:15379"/>
        <dbReference type="ChEBI" id="CHEBI:16455"/>
        <dbReference type="ChEBI" id="CHEBI:29033"/>
        <dbReference type="ChEBI" id="CHEBI:29034"/>
        <dbReference type="ChEBI" id="CHEBI:58387"/>
        <dbReference type="EC" id="1.14.18.9"/>
    </reaction>
</comment>
<comment type="cofactor">
    <cofactor evidence="1">
        <name>Fe cation</name>
        <dbReference type="ChEBI" id="CHEBI:24875"/>
    </cofactor>
</comment>
<comment type="pathway">
    <text>Steroid biosynthesis; zymosterol biosynthesis; zymosterol from lanosterol: step 3/6.</text>
</comment>
<comment type="subcellular location">
    <subcellularLocation>
        <location evidence="1">Endoplasmic reticulum membrane</location>
        <topology evidence="1">Multi-pass membrane protein</topology>
    </subcellularLocation>
</comment>
<comment type="domain">
    <text>The histidine box domains may contain the active site and/or be involved in metal ion binding.</text>
</comment>
<comment type="similarity">
    <text evidence="3">Belongs to the sterol desaturase family.</text>
</comment>
<accession>Q55D54</accession>
<organism>
    <name type="scientific">Dictyostelium discoideum</name>
    <name type="common">Social amoeba</name>
    <dbReference type="NCBI Taxonomy" id="44689"/>
    <lineage>
        <taxon>Eukaryota</taxon>
        <taxon>Amoebozoa</taxon>
        <taxon>Evosea</taxon>
        <taxon>Eumycetozoa</taxon>
        <taxon>Dictyostelia</taxon>
        <taxon>Dictyosteliales</taxon>
        <taxon>Dictyosteliaceae</taxon>
        <taxon>Dictyostelium</taxon>
    </lineage>
</organism>
<reference key="1">
    <citation type="journal article" date="2005" name="Nature">
        <title>The genome of the social amoeba Dictyostelium discoideum.</title>
        <authorList>
            <person name="Eichinger L."/>
            <person name="Pachebat J.A."/>
            <person name="Gloeckner G."/>
            <person name="Rajandream M.A."/>
            <person name="Sucgang R."/>
            <person name="Berriman M."/>
            <person name="Song J."/>
            <person name="Olsen R."/>
            <person name="Szafranski K."/>
            <person name="Xu Q."/>
            <person name="Tunggal B."/>
            <person name="Kummerfeld S."/>
            <person name="Madera M."/>
            <person name="Konfortov B.A."/>
            <person name="Rivero F."/>
            <person name="Bankier A.T."/>
            <person name="Lehmann R."/>
            <person name="Hamlin N."/>
            <person name="Davies R."/>
            <person name="Gaudet P."/>
            <person name="Fey P."/>
            <person name="Pilcher K."/>
            <person name="Chen G."/>
            <person name="Saunders D."/>
            <person name="Sodergren E.J."/>
            <person name="Davis P."/>
            <person name="Kerhornou A."/>
            <person name="Nie X."/>
            <person name="Hall N."/>
            <person name="Anjard C."/>
            <person name="Hemphill L."/>
            <person name="Bason N."/>
            <person name="Farbrother P."/>
            <person name="Desany B."/>
            <person name="Just E."/>
            <person name="Morio T."/>
            <person name="Rost R."/>
            <person name="Churcher C.M."/>
            <person name="Cooper J."/>
            <person name="Haydock S."/>
            <person name="van Driessche N."/>
            <person name="Cronin A."/>
            <person name="Goodhead I."/>
            <person name="Muzny D.M."/>
            <person name="Mourier T."/>
            <person name="Pain A."/>
            <person name="Lu M."/>
            <person name="Harper D."/>
            <person name="Lindsay R."/>
            <person name="Hauser H."/>
            <person name="James K.D."/>
            <person name="Quiles M."/>
            <person name="Madan Babu M."/>
            <person name="Saito T."/>
            <person name="Buchrieser C."/>
            <person name="Wardroper A."/>
            <person name="Felder M."/>
            <person name="Thangavelu M."/>
            <person name="Johnson D."/>
            <person name="Knights A."/>
            <person name="Loulseged H."/>
            <person name="Mungall K.L."/>
            <person name="Oliver K."/>
            <person name="Price C."/>
            <person name="Quail M.A."/>
            <person name="Urushihara H."/>
            <person name="Hernandez J."/>
            <person name="Rabbinowitsch E."/>
            <person name="Steffen D."/>
            <person name="Sanders M."/>
            <person name="Ma J."/>
            <person name="Kohara Y."/>
            <person name="Sharp S."/>
            <person name="Simmonds M.N."/>
            <person name="Spiegler S."/>
            <person name="Tivey A."/>
            <person name="Sugano S."/>
            <person name="White B."/>
            <person name="Walker D."/>
            <person name="Woodward J.R."/>
            <person name="Winckler T."/>
            <person name="Tanaka Y."/>
            <person name="Shaulsky G."/>
            <person name="Schleicher M."/>
            <person name="Weinstock G.M."/>
            <person name="Rosenthal A."/>
            <person name="Cox E.C."/>
            <person name="Chisholm R.L."/>
            <person name="Gibbs R.A."/>
            <person name="Loomis W.F."/>
            <person name="Platzer M."/>
            <person name="Kay R.R."/>
            <person name="Williams J.G."/>
            <person name="Dear P.H."/>
            <person name="Noegel A.A."/>
            <person name="Barrell B.G."/>
            <person name="Kuspa A."/>
        </authorList>
    </citation>
    <scope>NUCLEOTIDE SEQUENCE [LARGE SCALE GENOMIC DNA]</scope>
    <source>
        <strain>AX4</strain>
    </source>
</reference>
<protein>
    <recommendedName>
        <fullName>Putative methylsterol monooxygenase DDB_G0269788</fullName>
        <ecNumber>1.14.18.9</ecNumber>
    </recommendedName>
    <alternativeName>
        <fullName>C-4 methylsterol oxidase</fullName>
    </alternativeName>
</protein>
<evidence type="ECO:0000250" key="1"/>
<evidence type="ECO:0000255" key="2"/>
<evidence type="ECO:0000305" key="3"/>
<gene>
    <name type="ORF">DDB_G0269788</name>
</gene>
<dbReference type="EC" id="1.14.18.9"/>
<dbReference type="EMBL" id="AAFI02000005">
    <property type="protein sequence ID" value="EAL72244.1"/>
    <property type="molecule type" value="Genomic_DNA"/>
</dbReference>
<dbReference type="RefSeq" id="XP_646277.1">
    <property type="nucleotide sequence ID" value="XM_641185.1"/>
</dbReference>
<dbReference type="SMR" id="Q55D54"/>
<dbReference type="FunCoup" id="Q55D54">
    <property type="interactions" value="134"/>
</dbReference>
<dbReference type="STRING" id="44689.Q55D54"/>
<dbReference type="PaxDb" id="44689-DDB0304895"/>
<dbReference type="EnsemblProtists" id="EAL72244">
    <property type="protein sequence ID" value="EAL72244"/>
    <property type="gene ID" value="DDB_G0269788"/>
</dbReference>
<dbReference type="GeneID" id="8617233"/>
<dbReference type="KEGG" id="ddi:DDB_G0269788"/>
<dbReference type="dictyBase" id="DDB_G0269788"/>
<dbReference type="VEuPathDB" id="AmoebaDB:DDB_G0269788"/>
<dbReference type="eggNOG" id="KOG0873">
    <property type="taxonomic scope" value="Eukaryota"/>
</dbReference>
<dbReference type="HOGENOM" id="CLU_047036_5_3_1"/>
<dbReference type="InParanoid" id="Q55D54"/>
<dbReference type="OMA" id="IVHEFIY"/>
<dbReference type="PhylomeDB" id="Q55D54"/>
<dbReference type="Reactome" id="R-DDI-191273">
    <property type="pathway name" value="Cholesterol biosynthesis"/>
</dbReference>
<dbReference type="Reactome" id="R-DDI-192105">
    <property type="pathway name" value="Synthesis of bile acids and bile salts"/>
</dbReference>
<dbReference type="UniPathway" id="UPA00770">
    <property type="reaction ID" value="UER00756"/>
</dbReference>
<dbReference type="PRO" id="PR:Q55D54"/>
<dbReference type="Proteomes" id="UP000002195">
    <property type="component" value="Chromosome 1"/>
</dbReference>
<dbReference type="GO" id="GO:0005789">
    <property type="term" value="C:endoplasmic reticulum membrane"/>
    <property type="evidence" value="ECO:0000318"/>
    <property type="project" value="GO_Central"/>
</dbReference>
<dbReference type="GO" id="GO:0000254">
    <property type="term" value="F:C-4 methylsterol oxidase activity"/>
    <property type="evidence" value="ECO:0000318"/>
    <property type="project" value="GO_Central"/>
</dbReference>
<dbReference type="GO" id="GO:0005506">
    <property type="term" value="F:iron ion binding"/>
    <property type="evidence" value="ECO:0007669"/>
    <property type="project" value="InterPro"/>
</dbReference>
<dbReference type="GO" id="GO:0016126">
    <property type="term" value="P:sterol biosynthetic process"/>
    <property type="evidence" value="ECO:0000318"/>
    <property type="project" value="GO_Central"/>
</dbReference>
<dbReference type="InterPro" id="IPR006694">
    <property type="entry name" value="Fatty_acid_hydroxylase"/>
</dbReference>
<dbReference type="InterPro" id="IPR050307">
    <property type="entry name" value="Sterol_Desaturase_Related"/>
</dbReference>
<dbReference type="PANTHER" id="PTHR11863">
    <property type="entry name" value="STEROL DESATURASE"/>
    <property type="match status" value="1"/>
</dbReference>
<dbReference type="Pfam" id="PF04116">
    <property type="entry name" value="FA_hydroxylase"/>
    <property type="match status" value="1"/>
</dbReference>
<sequence length="270" mass="31952">MESLSLKFIEPYWFKFVDYYGEDFLITYGTFIAHEVFYFGSFIPFFLCDFMPFLQKYKIQPTKKNEWKTQFNCIFKVLMTHIFVQLPMMYIFDPAIKAIGLSARAPLPSIPYLIFTIACCFLIEDFYFYWVHRALHHGFWYKHIHKVHHDHAAPFGMTAEYAHPLETVILGVGTVIGPFLFSRDLFTLWVWLGTRLFQTVECHSGYDFPWNPTKLIPFWGGSHFHDFHHETFVGNYSSTFTYLDKIFGTSDKYYSRKQIRDSKLAAGKSE</sequence>